<accession>B0UWE6</accession>
<proteinExistence type="inferred from homology"/>
<name>MLTC_HISS2</name>
<dbReference type="EC" id="4.2.2.n1" evidence="1"/>
<dbReference type="EMBL" id="CP000947">
    <property type="protein sequence ID" value="ACA31618.1"/>
    <property type="molecule type" value="Genomic_DNA"/>
</dbReference>
<dbReference type="RefSeq" id="WP_011609814.1">
    <property type="nucleotide sequence ID" value="NC_010519.1"/>
</dbReference>
<dbReference type="SMR" id="B0UWE6"/>
<dbReference type="STRING" id="228400.HSM_1831"/>
<dbReference type="CAZy" id="GH23">
    <property type="family name" value="Glycoside Hydrolase Family 23"/>
</dbReference>
<dbReference type="GeneID" id="31488138"/>
<dbReference type="KEGG" id="hsm:HSM_1831"/>
<dbReference type="HOGENOM" id="CLU_044583_0_0_6"/>
<dbReference type="GO" id="GO:0009279">
    <property type="term" value="C:cell outer membrane"/>
    <property type="evidence" value="ECO:0007669"/>
    <property type="project" value="UniProtKB-SubCell"/>
</dbReference>
<dbReference type="GO" id="GO:0016798">
    <property type="term" value="F:hydrolase activity, acting on glycosyl bonds"/>
    <property type="evidence" value="ECO:0007669"/>
    <property type="project" value="InterPro"/>
</dbReference>
<dbReference type="GO" id="GO:0008933">
    <property type="term" value="F:peptidoglycan lytic transglycosylase activity"/>
    <property type="evidence" value="ECO:0007669"/>
    <property type="project" value="UniProtKB-UniRule"/>
</dbReference>
<dbReference type="GO" id="GO:0016998">
    <property type="term" value="P:cell wall macromolecule catabolic process"/>
    <property type="evidence" value="ECO:0007669"/>
    <property type="project" value="UniProtKB-UniRule"/>
</dbReference>
<dbReference type="GO" id="GO:0071555">
    <property type="term" value="P:cell wall organization"/>
    <property type="evidence" value="ECO:0007669"/>
    <property type="project" value="UniProtKB-KW"/>
</dbReference>
<dbReference type="GO" id="GO:0000270">
    <property type="term" value="P:peptidoglycan metabolic process"/>
    <property type="evidence" value="ECO:0007669"/>
    <property type="project" value="InterPro"/>
</dbReference>
<dbReference type="CDD" id="cd16893">
    <property type="entry name" value="LT_MltC_MltE"/>
    <property type="match status" value="1"/>
</dbReference>
<dbReference type="Gene3D" id="1.10.530.10">
    <property type="match status" value="1"/>
</dbReference>
<dbReference type="HAMAP" id="MF_01616">
    <property type="entry name" value="MltC"/>
    <property type="match status" value="1"/>
</dbReference>
<dbReference type="InterPro" id="IPR023346">
    <property type="entry name" value="Lysozyme-like_dom_sf"/>
</dbReference>
<dbReference type="InterPro" id="IPR023664">
    <property type="entry name" value="Murein_transglycosylaseC"/>
</dbReference>
<dbReference type="InterPro" id="IPR024570">
    <property type="entry name" value="Murein_transglycosylaseC_N"/>
</dbReference>
<dbReference type="InterPro" id="IPR000189">
    <property type="entry name" value="Transglyc_AS"/>
</dbReference>
<dbReference type="InterPro" id="IPR008258">
    <property type="entry name" value="Transglycosylase_SLT_dom_1"/>
</dbReference>
<dbReference type="NCBIfam" id="NF008670">
    <property type="entry name" value="PRK11671.1"/>
    <property type="match status" value="1"/>
</dbReference>
<dbReference type="PANTHER" id="PTHR37423:SF2">
    <property type="entry name" value="MEMBRANE-BOUND LYTIC MUREIN TRANSGLYCOSYLASE C"/>
    <property type="match status" value="1"/>
</dbReference>
<dbReference type="PANTHER" id="PTHR37423">
    <property type="entry name" value="SOLUBLE LYTIC MUREIN TRANSGLYCOSYLASE-RELATED"/>
    <property type="match status" value="1"/>
</dbReference>
<dbReference type="Pfam" id="PF11873">
    <property type="entry name" value="Mltc_N"/>
    <property type="match status" value="1"/>
</dbReference>
<dbReference type="Pfam" id="PF01464">
    <property type="entry name" value="SLT"/>
    <property type="match status" value="1"/>
</dbReference>
<dbReference type="SUPFAM" id="SSF53955">
    <property type="entry name" value="Lysozyme-like"/>
    <property type="match status" value="1"/>
</dbReference>
<dbReference type="PROSITE" id="PS51257">
    <property type="entry name" value="PROKAR_LIPOPROTEIN"/>
    <property type="match status" value="1"/>
</dbReference>
<dbReference type="PROSITE" id="PS00922">
    <property type="entry name" value="TRANSGLYCOSYLASE"/>
    <property type="match status" value="1"/>
</dbReference>
<protein>
    <recommendedName>
        <fullName evidence="1">Membrane-bound lytic murein transglycosylase C</fullName>
        <ecNumber evidence="1">4.2.2.n1</ecNumber>
    </recommendedName>
    <alternativeName>
        <fullName evidence="1">Murein lyase C</fullName>
    </alternativeName>
</protein>
<sequence>MKKYIVFAIIPFLFACSSSTLNDDYDEAFAKDTQGLDILTGQFSHNIDQIWGVNELLVASRKDYVKYTDNFYTRSHISFDEGSIMIETLGDKSRLYHSIIHTLLMGADAKGIDLFTSGDVPISSRPFLVGLVVDHKGKQVKNIATASNFANYLLQNKLQTRYLTNGNPVQYVIIPMVANHVAVRAQRYLPLIRKAAGRYGIDESLILGIMQTESSFNPYAISYANAIGLMQVVPHTAGRDVFRLKGLNGQPSKKYLFNPAKNIDTGVAYLTLLRDKYLDGITNPTSKRFAMISAYNSGAGAVLRVFHNDRDIAINKINRLYPEQVYRILTTMHPSEQARNYLLKVDKAQKSYRVIKNSESDLP</sequence>
<keyword id="KW-0998">Cell outer membrane</keyword>
<keyword id="KW-0961">Cell wall biogenesis/degradation</keyword>
<keyword id="KW-0449">Lipoprotein</keyword>
<keyword id="KW-0456">Lyase</keyword>
<keyword id="KW-0472">Membrane</keyword>
<keyword id="KW-0564">Palmitate</keyword>
<keyword id="KW-0732">Signal</keyword>
<organism>
    <name type="scientific">Histophilus somni (strain 2336)</name>
    <name type="common">Haemophilus somnus</name>
    <dbReference type="NCBI Taxonomy" id="228400"/>
    <lineage>
        <taxon>Bacteria</taxon>
        <taxon>Pseudomonadati</taxon>
        <taxon>Pseudomonadota</taxon>
        <taxon>Gammaproteobacteria</taxon>
        <taxon>Pasteurellales</taxon>
        <taxon>Pasteurellaceae</taxon>
        <taxon>Histophilus</taxon>
    </lineage>
</organism>
<gene>
    <name evidence="1" type="primary">mltC</name>
    <name type="ordered locus">HSM_1831</name>
</gene>
<evidence type="ECO:0000255" key="1">
    <source>
        <dbReference type="HAMAP-Rule" id="MF_01616"/>
    </source>
</evidence>
<reference key="1">
    <citation type="submission" date="2008-02" db="EMBL/GenBank/DDBJ databases">
        <title>Complete sequence of Haemophilus somnus 2336.</title>
        <authorList>
            <consortium name="US DOE Joint Genome Institute"/>
            <person name="Siddaramappa S."/>
            <person name="Duncan A.J."/>
            <person name="Challacombe J.F."/>
            <person name="Rainey D."/>
            <person name="Gillaspy A.F."/>
            <person name="Carson M."/>
            <person name="Gipson J."/>
            <person name="Gipson M."/>
            <person name="Bruce D."/>
            <person name="Detter J.C."/>
            <person name="Han C.S."/>
            <person name="Land M."/>
            <person name="Tapia R."/>
            <person name="Thompson L.S."/>
            <person name="Orvis J."/>
            <person name="Zaitshik J."/>
            <person name="Barnes G."/>
            <person name="Brettin T.S."/>
            <person name="Dyer D.W."/>
            <person name="Inzana T.J."/>
        </authorList>
    </citation>
    <scope>NUCLEOTIDE SEQUENCE [LARGE SCALE GENOMIC DNA]</scope>
    <source>
        <strain>2336</strain>
    </source>
</reference>
<feature type="signal peptide" evidence="1">
    <location>
        <begin position="1"/>
        <end position="15"/>
    </location>
</feature>
<feature type="chain" id="PRO_1000088060" description="Membrane-bound lytic murein transglycosylase C">
    <location>
        <begin position="16"/>
        <end position="363"/>
    </location>
</feature>
<feature type="lipid moiety-binding region" description="N-palmitoyl cysteine" evidence="1">
    <location>
        <position position="16"/>
    </location>
</feature>
<feature type="lipid moiety-binding region" description="S-diacylglycerol cysteine" evidence="1">
    <location>
        <position position="16"/>
    </location>
</feature>
<comment type="function">
    <text evidence="1">Murein-degrading enzyme. May play a role in recycling of muropeptides during cell elongation and/or cell division.</text>
</comment>
<comment type="catalytic activity">
    <reaction evidence="1">
        <text>Exolytic cleavage of the (1-&gt;4)-beta-glycosidic linkage between N-acetylmuramic acid (MurNAc) and N-acetylglucosamine (GlcNAc) residues in peptidoglycan, from either the reducing or the non-reducing ends of the peptidoglycan chains, with concomitant formation of a 1,6-anhydrobond in the MurNAc residue.</text>
        <dbReference type="EC" id="4.2.2.n1"/>
    </reaction>
</comment>
<comment type="subcellular location">
    <subcellularLocation>
        <location evidence="1">Cell outer membrane</location>
        <topology evidence="1">Lipid-anchor</topology>
    </subcellularLocation>
</comment>
<comment type="similarity">
    <text evidence="1">Belongs to the transglycosylase Slt family.</text>
</comment>